<keyword id="KW-0004">4Fe-4S</keyword>
<keyword id="KW-0148">Chlorophyll</keyword>
<keyword id="KW-0150">Chloroplast</keyword>
<keyword id="KW-0157">Chromophore</keyword>
<keyword id="KW-0249">Electron transport</keyword>
<keyword id="KW-0408">Iron</keyword>
<keyword id="KW-0411">Iron-sulfur</keyword>
<keyword id="KW-0460">Magnesium</keyword>
<keyword id="KW-0472">Membrane</keyword>
<keyword id="KW-0479">Metal-binding</keyword>
<keyword id="KW-0560">Oxidoreductase</keyword>
<keyword id="KW-0602">Photosynthesis</keyword>
<keyword id="KW-0603">Photosystem I</keyword>
<keyword id="KW-0934">Plastid</keyword>
<keyword id="KW-0793">Thylakoid</keyword>
<keyword id="KW-0812">Transmembrane</keyword>
<keyword id="KW-1133">Transmembrane helix</keyword>
<keyword id="KW-0813">Transport</keyword>
<organism>
    <name type="scientific">Araucaria araucana</name>
    <name type="common">Monkey-puzzle tree</name>
    <name type="synonym">Pinus araucana</name>
    <dbReference type="NCBI Taxonomy" id="42754"/>
    <lineage>
        <taxon>Eukaryota</taxon>
        <taxon>Viridiplantae</taxon>
        <taxon>Streptophyta</taxon>
        <taxon>Embryophyta</taxon>
        <taxon>Tracheophyta</taxon>
        <taxon>Spermatophyta</taxon>
        <taxon>Pinopsida</taxon>
        <taxon>Pinidae</taxon>
        <taxon>Conifers II</taxon>
        <taxon>Araucariales</taxon>
        <taxon>Araucariaceae</taxon>
        <taxon>Araucaria</taxon>
    </lineage>
</organism>
<gene>
    <name evidence="1" type="primary">psaA</name>
</gene>
<sequence length="716" mass="79543">VERDPIKTSFEKWAKPGHFSKTLSKGPNTTTWIWNLHADAHDFDSHTDDLEEISRKVFSAHFGQLAIILIWLSGMYFHGARFSNYEAWLSDPTHIKPSAQVVWPIVGQEILNGDVGGGFRGIQITSGFFQLWRASGITSELQLYCTAIGGLIFAGLMLFAGWFHYHKAAPKLAWFQDVESMLNHHLAGLLGLGSLSWAGHQVHVSLPINQLLDAGVDPKEIPLPHEFILNRDLLAQLYPSFAKGLTPFFTLNWSEYSDFLTFRGGLNPVTGGLWLTDTVHHHLAIAILFLIAGHMYRTNWSIGHSLKEILEAHKGPFTGEGHKGLYEILTTSWHAQLALNLAMLGSLTIVVAHHMYSMPPYPYLAIDYGTQLSLFTHHMWIGGFLIVGAAAHAAIFMVRDYDPTTQYNNLLDRVLRHRDAIISHLNWVCIFLGFHSFGLYIHNDTMSALGRPQDMFSDTAIQLQPIFAQWIQNTHASAPSLTAPDATASTSLTWGGGDLVAVGNKVALLPIPLGTADFLVHHIHAFTIHVTVLILLKGVLFARSSRLIPDKANLGFRFPCDGPGRGGTCQVSAWDHVFLGLFWMYNAISVVIFHFSWKMQSDVWGSISDQGVVTHITGGNFAQSSITINGWLRDFLWAQASQVIQSYGSSLSAYGLLFLGAHFVWAFSLMFLFSGRGYWQELIESIVWAHNKLKVAPAIQPRALSIVQGRAVGVAH</sequence>
<geneLocation type="chloroplast"/>
<name>PSAA_ARAAA</name>
<dbReference type="EC" id="1.97.1.12" evidence="1"/>
<dbReference type="EMBL" id="AF180018">
    <property type="protein sequence ID" value="AAF29819.1"/>
    <property type="molecule type" value="Genomic_DNA"/>
</dbReference>
<dbReference type="SMR" id="Q9MUJ7"/>
<dbReference type="GO" id="GO:0009535">
    <property type="term" value="C:chloroplast thylakoid membrane"/>
    <property type="evidence" value="ECO:0007669"/>
    <property type="project" value="UniProtKB-SubCell"/>
</dbReference>
<dbReference type="GO" id="GO:0009522">
    <property type="term" value="C:photosystem I"/>
    <property type="evidence" value="ECO:0007669"/>
    <property type="project" value="UniProtKB-KW"/>
</dbReference>
<dbReference type="GO" id="GO:0051539">
    <property type="term" value="F:4 iron, 4 sulfur cluster binding"/>
    <property type="evidence" value="ECO:0007669"/>
    <property type="project" value="UniProtKB-KW"/>
</dbReference>
<dbReference type="GO" id="GO:0016168">
    <property type="term" value="F:chlorophyll binding"/>
    <property type="evidence" value="ECO:0007669"/>
    <property type="project" value="UniProtKB-KW"/>
</dbReference>
<dbReference type="GO" id="GO:0046872">
    <property type="term" value="F:metal ion binding"/>
    <property type="evidence" value="ECO:0007669"/>
    <property type="project" value="UniProtKB-KW"/>
</dbReference>
<dbReference type="GO" id="GO:0016491">
    <property type="term" value="F:oxidoreductase activity"/>
    <property type="evidence" value="ECO:0007669"/>
    <property type="project" value="UniProtKB-KW"/>
</dbReference>
<dbReference type="GO" id="GO:0015979">
    <property type="term" value="P:photosynthesis"/>
    <property type="evidence" value="ECO:0007669"/>
    <property type="project" value="UniProtKB-KW"/>
</dbReference>
<dbReference type="FunFam" id="1.20.1130.10:FF:000001">
    <property type="entry name" value="Photosystem I P700 chlorophyll a apoprotein A2"/>
    <property type="match status" value="1"/>
</dbReference>
<dbReference type="Gene3D" id="1.20.1130.10">
    <property type="entry name" value="Photosystem I PsaA/PsaB"/>
    <property type="match status" value="1"/>
</dbReference>
<dbReference type="HAMAP" id="MF_00458">
    <property type="entry name" value="PSI_PsaA"/>
    <property type="match status" value="1"/>
</dbReference>
<dbReference type="InterPro" id="IPR006243">
    <property type="entry name" value="PSI_PsaA"/>
</dbReference>
<dbReference type="InterPro" id="IPR001280">
    <property type="entry name" value="PSI_PsaA/B"/>
</dbReference>
<dbReference type="InterPro" id="IPR020586">
    <property type="entry name" value="PSI_PsaA/B_CS"/>
</dbReference>
<dbReference type="InterPro" id="IPR036408">
    <property type="entry name" value="PSI_PsaA/B_sf"/>
</dbReference>
<dbReference type="NCBIfam" id="TIGR01335">
    <property type="entry name" value="psaA"/>
    <property type="match status" value="1"/>
</dbReference>
<dbReference type="PANTHER" id="PTHR30128">
    <property type="entry name" value="OUTER MEMBRANE PROTEIN, OMPA-RELATED"/>
    <property type="match status" value="1"/>
</dbReference>
<dbReference type="PANTHER" id="PTHR30128:SF19">
    <property type="entry name" value="PHOTOSYSTEM I P700 CHLOROPHYLL A APOPROTEIN A1-RELATED"/>
    <property type="match status" value="1"/>
</dbReference>
<dbReference type="Pfam" id="PF00223">
    <property type="entry name" value="PsaA_PsaB"/>
    <property type="match status" value="1"/>
</dbReference>
<dbReference type="PIRSF" id="PIRSF002905">
    <property type="entry name" value="PSI_A"/>
    <property type="match status" value="1"/>
</dbReference>
<dbReference type="PRINTS" id="PR00257">
    <property type="entry name" value="PHOTSYSPSAAB"/>
</dbReference>
<dbReference type="SUPFAM" id="SSF81558">
    <property type="entry name" value="Photosystem I subunits PsaA/PsaB"/>
    <property type="match status" value="1"/>
</dbReference>
<dbReference type="PROSITE" id="PS00419">
    <property type="entry name" value="PHOTOSYSTEM_I_PSAAB"/>
    <property type="match status" value="1"/>
</dbReference>
<evidence type="ECO:0000255" key="1">
    <source>
        <dbReference type="HAMAP-Rule" id="MF_00458"/>
    </source>
</evidence>
<reference key="1">
    <citation type="journal article" date="2000" name="Mol. Biol. Evol.">
        <title>Error, bias, and long-branch attraction in data for two chloroplast photosystem genes in seed plants.</title>
        <authorList>
            <person name="Sanderson M.J."/>
            <person name="Wojciechowski M.F."/>
            <person name="Hu J.-M."/>
            <person name="Sher Khan T."/>
            <person name="Brady S.G."/>
        </authorList>
    </citation>
    <scope>NUCLEOTIDE SEQUENCE [GENOMIC DNA]</scope>
</reference>
<comment type="function">
    <text>PsaA and PsaB bind P700, the primary electron donor of photosystem I (PSI), as well as the electron acceptors A0, A1 and FX. PSI is a plastocyanin-ferredoxin oxidoreductase, converting photonic excitation into a charge separation, which transfers an electron from the donor P700 chlorophyll pair to the spectroscopically characterized acceptors A0, A1, FX, FA and FB in turn. Oxidized P700 is reduced on the lumenal side of the thylakoid membrane by plastocyanin.</text>
</comment>
<comment type="catalytic activity">
    <reaction evidence="1">
        <text>reduced [plastocyanin] + hnu + oxidized [2Fe-2S]-[ferredoxin] = oxidized [plastocyanin] + reduced [2Fe-2S]-[ferredoxin]</text>
        <dbReference type="Rhea" id="RHEA:30407"/>
        <dbReference type="Rhea" id="RHEA-COMP:10000"/>
        <dbReference type="Rhea" id="RHEA-COMP:10001"/>
        <dbReference type="Rhea" id="RHEA-COMP:10039"/>
        <dbReference type="Rhea" id="RHEA-COMP:10040"/>
        <dbReference type="ChEBI" id="CHEBI:29036"/>
        <dbReference type="ChEBI" id="CHEBI:30212"/>
        <dbReference type="ChEBI" id="CHEBI:33737"/>
        <dbReference type="ChEBI" id="CHEBI:33738"/>
        <dbReference type="ChEBI" id="CHEBI:49552"/>
        <dbReference type="EC" id="1.97.1.12"/>
    </reaction>
</comment>
<comment type="cofactor">
    <text evidence="1">P700 is a chlorophyll a/chlorophyll a' dimer, A0 is one or more chlorophyll a, A1 is one or both phylloquinones and FX is a shared 4Fe-4S iron-sulfur center.</text>
</comment>
<comment type="subunit">
    <text evidence="1">The PsaA/B heterodimer binds the P700 chlorophyll special pair and subsequent electron acceptors. PSI consists of a core antenna complex that captures photons, and an electron transfer chain that converts photonic excitation into a charge separation. The eukaryotic PSI reaction center is composed of at least 11 subunits.</text>
</comment>
<comment type="subcellular location">
    <subcellularLocation>
        <location evidence="1">Plastid</location>
        <location evidence="1">Chloroplast thylakoid membrane</location>
        <topology evidence="1">Multi-pass membrane protein</topology>
    </subcellularLocation>
</comment>
<comment type="similarity">
    <text evidence="1">Belongs to the PsaA/PsaB family.</text>
</comment>
<protein>
    <recommendedName>
        <fullName evidence="1">Photosystem I P700 chlorophyll a apoprotein A1</fullName>
        <ecNumber evidence="1">1.97.1.12</ecNumber>
    </recommendedName>
    <alternativeName>
        <fullName evidence="1">PSI-A</fullName>
    </alternativeName>
    <alternativeName>
        <fullName evidence="1">PsaA</fullName>
    </alternativeName>
</protein>
<accession>Q9MUJ7</accession>
<feature type="chain" id="PRO_0000088533" description="Photosystem I P700 chlorophyll a apoprotein A1">
    <location>
        <begin position="1" status="less than"/>
        <end position="716" status="greater than"/>
    </location>
</feature>
<feature type="transmembrane region" description="Helical; Name=I" evidence="1">
    <location>
        <begin position="57"/>
        <end position="80"/>
    </location>
</feature>
<feature type="transmembrane region" description="Helical; Name=II" evidence="1">
    <location>
        <begin position="143"/>
        <end position="166"/>
    </location>
</feature>
<feature type="transmembrane region" description="Helical; Name=III" evidence="1">
    <location>
        <begin position="182"/>
        <end position="206"/>
    </location>
</feature>
<feature type="transmembrane region" description="Helical; Name=IV" evidence="1">
    <location>
        <begin position="278"/>
        <end position="296"/>
    </location>
</feature>
<feature type="transmembrane region" description="Helical; Name=V" evidence="1">
    <location>
        <begin position="333"/>
        <end position="356"/>
    </location>
</feature>
<feature type="transmembrane region" description="Helical; Name=VI" evidence="1">
    <location>
        <begin position="372"/>
        <end position="398"/>
    </location>
</feature>
<feature type="transmembrane region" description="Helical; Name=VII" evidence="1">
    <location>
        <begin position="420"/>
        <end position="442"/>
    </location>
</feature>
<feature type="transmembrane region" description="Helical; Name=VIII" evidence="1">
    <location>
        <begin position="518"/>
        <end position="536"/>
    </location>
</feature>
<feature type="transmembrane region" description="Helical; Name=IX" evidence="1">
    <location>
        <begin position="576"/>
        <end position="597"/>
    </location>
</feature>
<feature type="transmembrane region" description="Helical; Name=X" evidence="1">
    <location>
        <begin position="651"/>
        <end position="673"/>
    </location>
</feature>
<feature type="transmembrane region" description="Helical; Name=XI" evidence="1">
    <location>
        <begin position="711"/>
        <end position="716" status="greater than"/>
    </location>
</feature>
<feature type="binding site" evidence="1">
    <location>
        <position position="560"/>
    </location>
    <ligand>
        <name>[4Fe-4S] cluster</name>
        <dbReference type="ChEBI" id="CHEBI:49883"/>
        <note>ligand shared between dimeric partners</note>
    </ligand>
</feature>
<feature type="binding site" evidence="1">
    <location>
        <position position="569"/>
    </location>
    <ligand>
        <name>[4Fe-4S] cluster</name>
        <dbReference type="ChEBI" id="CHEBI:49883"/>
        <note>ligand shared between dimeric partners</note>
    </ligand>
</feature>
<feature type="binding site" description="axial binding residue" evidence="1">
    <location>
        <position position="662"/>
    </location>
    <ligand>
        <name>chlorophyll a'</name>
        <dbReference type="ChEBI" id="CHEBI:189419"/>
        <label>A1</label>
    </ligand>
    <ligandPart>
        <name>Mg</name>
        <dbReference type="ChEBI" id="CHEBI:25107"/>
    </ligandPart>
</feature>
<feature type="binding site" description="axial binding residue" evidence="1">
    <location>
        <position position="670"/>
    </location>
    <ligand>
        <name>chlorophyll a</name>
        <dbReference type="ChEBI" id="CHEBI:58416"/>
        <label>A3</label>
    </ligand>
    <ligandPart>
        <name>Mg</name>
        <dbReference type="ChEBI" id="CHEBI:25107"/>
    </ligandPart>
</feature>
<feature type="binding site" evidence="1">
    <location>
        <position position="678"/>
    </location>
    <ligand>
        <name>chlorophyll a</name>
        <dbReference type="ChEBI" id="CHEBI:58416"/>
        <label>A3</label>
    </ligand>
</feature>
<feature type="binding site" evidence="1">
    <location>
        <position position="679"/>
    </location>
    <ligand>
        <name>phylloquinone</name>
        <dbReference type="ChEBI" id="CHEBI:18067"/>
        <label>A</label>
    </ligand>
</feature>
<feature type="non-terminal residue">
    <location>
        <position position="1"/>
    </location>
</feature>
<feature type="non-terminal residue">
    <location>
        <position position="716"/>
    </location>
</feature>
<proteinExistence type="inferred from homology"/>